<proteinExistence type="inferred from homology"/>
<name>AATC_PYRFU</name>
<comment type="function">
    <text evidence="1">Component of the A-type ATP synthase that produces ATP from ADP in the presence of a proton gradient across the membrane.</text>
</comment>
<comment type="subunit">
    <text evidence="1">Has multiple subunits with at least A(3), B(3), C, D, E, F, H, I and proteolipid K(x).</text>
</comment>
<comment type="subcellular location">
    <subcellularLocation>
        <location evidence="1">Cell membrane</location>
        <topology evidence="1">Peripheral membrane protein</topology>
    </subcellularLocation>
</comment>
<comment type="similarity">
    <text evidence="1">Belongs to the V-ATPase V0D/AC39 subunit family.</text>
</comment>
<keyword id="KW-0066">ATP synthesis</keyword>
<keyword id="KW-1003">Cell membrane</keyword>
<keyword id="KW-0375">Hydrogen ion transport</keyword>
<keyword id="KW-0406">Ion transport</keyword>
<keyword id="KW-0472">Membrane</keyword>
<keyword id="KW-1185">Reference proteome</keyword>
<keyword id="KW-0813">Transport</keyword>
<organism>
    <name type="scientific">Pyrococcus furiosus (strain ATCC 43587 / DSM 3638 / JCM 8422 / Vc1)</name>
    <dbReference type="NCBI Taxonomy" id="186497"/>
    <lineage>
        <taxon>Archaea</taxon>
        <taxon>Methanobacteriati</taxon>
        <taxon>Methanobacteriota</taxon>
        <taxon>Thermococci</taxon>
        <taxon>Thermococcales</taxon>
        <taxon>Thermococcaceae</taxon>
        <taxon>Pyrococcus</taxon>
    </lineage>
</organism>
<sequence>MEISTITMILDTTLVAVFAWVAYKTGSLIWKYTPYSYPNARIRAMEARLLSDQRLLELAESKELENFVVNLEDSDYGKRLSELKSYSVEEIEKALDLSFVDTILLFQKIMPKRVRGFFEVMLEEWDVRNIVNVVKAKITGLPAQDFVIPVGKILNKVKAMVEAKTMEEILVILEGTEYEEPVRKLILKEINLPEFEHLMYSLHYQKLLNYVNSRKGEEKVILSEFVSSLIDSKNISLILRAKASGINAEKLKIMLIPGGSISRNVLEAMISAEDPLMALTELEKTKYAEVVKNSREAVEKGDISTVEKQLRRYIQQRMKEQSQFYPLSVAVALSYMLQKENEIRKLKAIVRLIADRVRPERIKEIVGEVT</sequence>
<dbReference type="EMBL" id="AE009950">
    <property type="protein sequence ID" value="AAL80304.1"/>
    <property type="molecule type" value="Genomic_DNA"/>
</dbReference>
<dbReference type="RefSeq" id="WP_011011293.1">
    <property type="nucleotide sequence ID" value="NZ_CP023154.1"/>
</dbReference>
<dbReference type="SMR" id="Q8U4A8"/>
<dbReference type="STRING" id="186497.PF0180"/>
<dbReference type="PaxDb" id="186497-PF0180"/>
<dbReference type="KEGG" id="pfu:PF0180"/>
<dbReference type="PATRIC" id="fig|186497.12.peg.187"/>
<dbReference type="eggNOG" id="arCOG02459">
    <property type="taxonomic scope" value="Archaea"/>
</dbReference>
<dbReference type="HOGENOM" id="CLU_059311_0_0_2"/>
<dbReference type="OrthoDB" id="4272at2157"/>
<dbReference type="PhylomeDB" id="Q8U4A8"/>
<dbReference type="Proteomes" id="UP000001013">
    <property type="component" value="Chromosome"/>
</dbReference>
<dbReference type="GO" id="GO:0005886">
    <property type="term" value="C:plasma membrane"/>
    <property type="evidence" value="ECO:0007669"/>
    <property type="project" value="UniProtKB-SubCell"/>
</dbReference>
<dbReference type="GO" id="GO:0033179">
    <property type="term" value="C:proton-transporting V-type ATPase, V0 domain"/>
    <property type="evidence" value="ECO:0007669"/>
    <property type="project" value="InterPro"/>
</dbReference>
<dbReference type="GO" id="GO:0005524">
    <property type="term" value="F:ATP binding"/>
    <property type="evidence" value="ECO:0007669"/>
    <property type="project" value="UniProtKB-UniRule"/>
</dbReference>
<dbReference type="GO" id="GO:0046933">
    <property type="term" value="F:proton-transporting ATP synthase activity, rotational mechanism"/>
    <property type="evidence" value="ECO:0007669"/>
    <property type="project" value="UniProtKB-UniRule"/>
</dbReference>
<dbReference type="GO" id="GO:0046961">
    <property type="term" value="F:proton-transporting ATPase activity, rotational mechanism"/>
    <property type="evidence" value="ECO:0007669"/>
    <property type="project" value="InterPro"/>
</dbReference>
<dbReference type="GO" id="GO:0042777">
    <property type="term" value="P:proton motive force-driven plasma membrane ATP synthesis"/>
    <property type="evidence" value="ECO:0007669"/>
    <property type="project" value="UniProtKB-UniRule"/>
</dbReference>
<dbReference type="Gene3D" id="1.10.132.50">
    <property type="entry name" value="ATP synthase (C/AC39) subunit, domain 3"/>
    <property type="match status" value="1"/>
</dbReference>
<dbReference type="Gene3D" id="1.20.1690.10">
    <property type="entry name" value="V-type ATP synthase subunit C domain"/>
    <property type="match status" value="2"/>
</dbReference>
<dbReference type="HAMAP" id="MF_00314">
    <property type="entry name" value="ATP_synth_C_arch"/>
    <property type="match status" value="1"/>
</dbReference>
<dbReference type="InterPro" id="IPR036079">
    <property type="entry name" value="ATPase_csu/dsu_sf"/>
</dbReference>
<dbReference type="InterPro" id="IPR014272">
    <property type="entry name" value="ATPase_V0-cplx_csu"/>
</dbReference>
<dbReference type="InterPro" id="IPR002843">
    <property type="entry name" value="ATPase_V0-cplx_csu/dsu"/>
</dbReference>
<dbReference type="InterPro" id="IPR050873">
    <property type="entry name" value="V-ATPase_V0D/AC39_subunit"/>
</dbReference>
<dbReference type="InterPro" id="IPR035067">
    <property type="entry name" value="V-type_ATPase_csu/dsu"/>
</dbReference>
<dbReference type="InterPro" id="IPR044911">
    <property type="entry name" value="V-type_ATPase_csu/dsu_dom_3"/>
</dbReference>
<dbReference type="NCBIfam" id="TIGR02923">
    <property type="entry name" value="AhaC"/>
    <property type="match status" value="1"/>
</dbReference>
<dbReference type="NCBIfam" id="NF002269">
    <property type="entry name" value="PRK01198.1-5"/>
    <property type="match status" value="1"/>
</dbReference>
<dbReference type="PANTHER" id="PTHR38682">
    <property type="entry name" value="V-TYPE ATP SYNTHASE SUBUNIT C"/>
    <property type="match status" value="1"/>
</dbReference>
<dbReference type="PANTHER" id="PTHR38682:SF1">
    <property type="entry name" value="V-TYPE ATP SYNTHASE SUBUNIT C"/>
    <property type="match status" value="1"/>
</dbReference>
<dbReference type="Pfam" id="PF01992">
    <property type="entry name" value="vATP-synt_AC39"/>
    <property type="match status" value="1"/>
</dbReference>
<dbReference type="SUPFAM" id="SSF103486">
    <property type="entry name" value="V-type ATP synthase subunit C"/>
    <property type="match status" value="1"/>
</dbReference>
<protein>
    <recommendedName>
        <fullName evidence="1">A-type ATP synthase subunit C</fullName>
    </recommendedName>
</protein>
<gene>
    <name evidence="1" type="primary">atpC</name>
    <name type="ordered locus">PF0180</name>
</gene>
<reference key="1">
    <citation type="journal article" date="1999" name="Genetics">
        <title>Divergence of the hyperthermophilic archaea Pyrococcus furiosus and P. horikoshii inferred from complete genomic sequences.</title>
        <authorList>
            <person name="Maeder D.L."/>
            <person name="Weiss R.B."/>
            <person name="Dunn D.M."/>
            <person name="Cherry J.L."/>
            <person name="Gonzalez J.M."/>
            <person name="DiRuggiero J."/>
            <person name="Robb F.T."/>
        </authorList>
    </citation>
    <scope>NUCLEOTIDE SEQUENCE [LARGE SCALE GENOMIC DNA]</scope>
    <source>
        <strain>ATCC 43587 / DSM 3638 / JCM 8422 / Vc1</strain>
    </source>
</reference>
<evidence type="ECO:0000255" key="1">
    <source>
        <dbReference type="HAMAP-Rule" id="MF_00314"/>
    </source>
</evidence>
<accession>Q8U4A8</accession>
<feature type="chain" id="PRO_0000119370" description="A-type ATP synthase subunit C">
    <location>
        <begin position="1"/>
        <end position="370"/>
    </location>
</feature>